<accession>P70837</accession>
<feature type="signal peptide" evidence="1">
    <location>
        <begin position="1"/>
        <end position="18"/>
    </location>
</feature>
<feature type="chain" id="PRO_0000013751" description="Uncharacterized lipoprotein BBD10">
    <location>
        <begin position="19"/>
        <end position="192"/>
    </location>
</feature>
<feature type="lipid moiety-binding region" description="N-palmitoyl cysteine" evidence="1">
    <location>
        <position position="19"/>
    </location>
</feature>
<feature type="lipid moiety-binding region" description="S-diacylglycerol cysteine" evidence="1">
    <location>
        <position position="19"/>
    </location>
</feature>
<proteinExistence type="inferred from homology"/>
<gene>
    <name type="ordered locus">BB_D10</name>
    <name type="ORF">CdsG</name>
</gene>
<sequence length="192" mass="22705">MNSKFILKYFILAFFLVSCQTYQIAYDRFSQVLDSQYDIGVNYSRDGIFKSVISIKYDKLKNKREYFILVRVESRNSSQIKPEKIITDTRFEAKGELVSEDSKRVVYYNDFYDSYFPYDYTTVITEKNIKVEIYKFIISESEFIRFVALGNDNIAAFRIYAFRNDVIVSFNKIPFKKFLDDFNSKVKLLGGS</sequence>
<protein>
    <recommendedName>
        <fullName>Uncharacterized lipoprotein BBD10</fullName>
    </recommendedName>
</protein>
<name>Y2810_BORBU</name>
<comment type="subcellular location">
    <subcellularLocation>
        <location evidence="1">Cell membrane</location>
        <topology evidence="1">Lipid-anchor</topology>
    </subcellularLocation>
</comment>
<geneLocation type="plasmid">
    <name>lp17 (linear 17 kb)</name>
    <name>lp16</name>
</geneLocation>
<organism>
    <name type="scientific">Borreliella burgdorferi (strain ATCC 35210 / DSM 4680 / CIP 102532 / B31)</name>
    <name type="common">Borrelia burgdorferi</name>
    <dbReference type="NCBI Taxonomy" id="224326"/>
    <lineage>
        <taxon>Bacteria</taxon>
        <taxon>Pseudomonadati</taxon>
        <taxon>Spirochaetota</taxon>
        <taxon>Spirochaetia</taxon>
        <taxon>Spirochaetales</taxon>
        <taxon>Borreliaceae</taxon>
        <taxon>Borreliella</taxon>
    </lineage>
</organism>
<dbReference type="EMBL" id="U43414">
    <property type="protein sequence ID" value="AAB38555.1"/>
    <property type="molecule type" value="Genomic_DNA"/>
</dbReference>
<dbReference type="EMBL" id="AE000793">
    <property type="protein sequence ID" value="AAC66352.1"/>
    <property type="molecule type" value="Genomic_DNA"/>
</dbReference>
<dbReference type="PIR" id="F70222">
    <property type="entry name" value="F70222"/>
</dbReference>
<dbReference type="RefSeq" id="NP_045394.1">
    <property type="nucleotide sequence ID" value="NC_001849.2"/>
</dbReference>
<dbReference type="RefSeq" id="NP_862708.1">
    <property type="nucleotide sequence ID" value="NC_004988.1"/>
</dbReference>
<dbReference type="RefSeq" id="WP_010890252.1">
    <property type="nucleotide sequence ID" value="NC_001849.2"/>
</dbReference>
<dbReference type="EnsemblBacteria" id="AAC66352">
    <property type="protein sequence ID" value="AAC66352"/>
    <property type="gene ID" value="BB_D10"/>
</dbReference>
<dbReference type="KEGG" id="bbu:BB_D10"/>
<dbReference type="PATRIC" id="fig|224326.49.peg.1254"/>
<dbReference type="HOGENOM" id="CLU_1412775_0_0_12"/>
<dbReference type="OrthoDB" id="351999at2"/>
<dbReference type="PRO" id="PR:P70837"/>
<dbReference type="Proteomes" id="UP000001807">
    <property type="component" value="Plasmid lp17"/>
</dbReference>
<dbReference type="GO" id="GO:0005886">
    <property type="term" value="C:plasma membrane"/>
    <property type="evidence" value="ECO:0007669"/>
    <property type="project" value="UniProtKB-SubCell"/>
</dbReference>
<dbReference type="PROSITE" id="PS51257">
    <property type="entry name" value="PROKAR_LIPOPROTEIN"/>
    <property type="match status" value="1"/>
</dbReference>
<reference key="1">
    <citation type="journal article" date="1996" name="J. Bacteriol.">
        <title>The nucleotide sequence of a linear plasmid of Borrelia burgdorferi reveals similarities to those of circular plasmids of other prokaryotes.</title>
        <authorList>
            <person name="Barbour A.G."/>
            <person name="Carter C.J."/>
            <person name="Bundoc V."/>
            <person name="Hinnebusch J."/>
        </authorList>
    </citation>
    <scope>NUCLEOTIDE SEQUENCE [GENOMIC DNA]</scope>
    <source>
        <strain>ATCC 35210 / DSM 4680 / CIP 102532 / B31</strain>
    </source>
</reference>
<reference key="2">
    <citation type="journal article" date="1997" name="Nature">
        <title>Genomic sequence of a Lyme disease spirochaete, Borrelia burgdorferi.</title>
        <authorList>
            <person name="Fraser C.M."/>
            <person name="Casjens S."/>
            <person name="Huang W.M."/>
            <person name="Sutton G.G."/>
            <person name="Clayton R.A."/>
            <person name="Lathigra R."/>
            <person name="White O."/>
            <person name="Ketchum K.A."/>
            <person name="Dodson R.J."/>
            <person name="Hickey E.K."/>
            <person name="Gwinn M.L."/>
            <person name="Dougherty B.A."/>
            <person name="Tomb J.-F."/>
            <person name="Fleischmann R.D."/>
            <person name="Richardson D.L."/>
            <person name="Peterson J.D."/>
            <person name="Kerlavage A.R."/>
            <person name="Quackenbush J."/>
            <person name="Salzberg S.L."/>
            <person name="Hanson M."/>
            <person name="van Vugt R."/>
            <person name="Palmer N."/>
            <person name="Adams M.D."/>
            <person name="Gocayne J.D."/>
            <person name="Weidman J.F."/>
            <person name="Utterback T.R."/>
            <person name="Watthey L."/>
            <person name="McDonald L.A."/>
            <person name="Artiach P."/>
            <person name="Bowman C."/>
            <person name="Garland S.A."/>
            <person name="Fujii C."/>
            <person name="Cotton M.D."/>
            <person name="Horst K."/>
            <person name="Roberts K.M."/>
            <person name="Hatch B."/>
            <person name="Smith H.O."/>
            <person name="Venter J.C."/>
        </authorList>
    </citation>
    <scope>NUCLEOTIDE SEQUENCE [LARGE SCALE GENOMIC DNA]</scope>
    <source>
        <strain>ATCC 35210 / DSM 4680 / CIP 102532 / B31</strain>
    </source>
</reference>
<evidence type="ECO:0000255" key="1">
    <source>
        <dbReference type="PROSITE-ProRule" id="PRU00303"/>
    </source>
</evidence>
<keyword id="KW-1003">Cell membrane</keyword>
<keyword id="KW-0449">Lipoprotein</keyword>
<keyword id="KW-0472">Membrane</keyword>
<keyword id="KW-0564">Palmitate</keyword>
<keyword id="KW-0614">Plasmid</keyword>
<keyword id="KW-1185">Reference proteome</keyword>
<keyword id="KW-0732">Signal</keyword>